<organism>
    <name type="scientific">Ligilactobacillus salivarius (strain UCC118)</name>
    <name type="common">Lactobacillus salivarius</name>
    <dbReference type="NCBI Taxonomy" id="362948"/>
    <lineage>
        <taxon>Bacteria</taxon>
        <taxon>Bacillati</taxon>
        <taxon>Bacillota</taxon>
        <taxon>Bacilli</taxon>
        <taxon>Lactobacillales</taxon>
        <taxon>Lactobacillaceae</taxon>
        <taxon>Ligilactobacillus</taxon>
    </lineage>
</organism>
<evidence type="ECO:0000255" key="1">
    <source>
        <dbReference type="HAMAP-Rule" id="MF_01333"/>
    </source>
</evidence>
<evidence type="ECO:0000305" key="2"/>
<sequence>MVNRLKEKYDNEIVPSLMEKFNYTSIMQAPKVDKIVINMGVGDAVSNAKRLDEAVDELTLIAGQKPVITKAKKSIAGFRLREGMAIGAKVTLRGQRMYEFLDKLVSVSLPRVRDFHGVSKRAFDGRGNYTLGIREQLIFPEIDFDDVNKVRGMDIVIVTTANTDEESRELLTQLGMPFAK</sequence>
<dbReference type="EMBL" id="CP000233">
    <property type="protein sequence ID" value="ABE00227.1"/>
    <property type="molecule type" value="Genomic_DNA"/>
</dbReference>
<dbReference type="RefSeq" id="WP_003701318.1">
    <property type="nucleotide sequence ID" value="NC_007929.1"/>
</dbReference>
<dbReference type="RefSeq" id="YP_536310.1">
    <property type="nucleotide sequence ID" value="NC_007929.1"/>
</dbReference>
<dbReference type="SMR" id="Q1WSA2"/>
<dbReference type="STRING" id="362948.LSL_1423"/>
<dbReference type="GeneID" id="89466158"/>
<dbReference type="KEGG" id="lsl:LSL_1423"/>
<dbReference type="PATRIC" id="fig|362948.14.peg.1506"/>
<dbReference type="HOGENOM" id="CLU_061015_2_1_9"/>
<dbReference type="OrthoDB" id="9806626at2"/>
<dbReference type="Proteomes" id="UP000006559">
    <property type="component" value="Chromosome"/>
</dbReference>
<dbReference type="GO" id="GO:1990904">
    <property type="term" value="C:ribonucleoprotein complex"/>
    <property type="evidence" value="ECO:0007669"/>
    <property type="project" value="UniProtKB-KW"/>
</dbReference>
<dbReference type="GO" id="GO:0005840">
    <property type="term" value="C:ribosome"/>
    <property type="evidence" value="ECO:0007669"/>
    <property type="project" value="UniProtKB-KW"/>
</dbReference>
<dbReference type="GO" id="GO:0019843">
    <property type="term" value="F:rRNA binding"/>
    <property type="evidence" value="ECO:0007669"/>
    <property type="project" value="UniProtKB-UniRule"/>
</dbReference>
<dbReference type="GO" id="GO:0003735">
    <property type="term" value="F:structural constituent of ribosome"/>
    <property type="evidence" value="ECO:0007669"/>
    <property type="project" value="InterPro"/>
</dbReference>
<dbReference type="GO" id="GO:0000049">
    <property type="term" value="F:tRNA binding"/>
    <property type="evidence" value="ECO:0007669"/>
    <property type="project" value="UniProtKB-UniRule"/>
</dbReference>
<dbReference type="GO" id="GO:0006412">
    <property type="term" value="P:translation"/>
    <property type="evidence" value="ECO:0007669"/>
    <property type="project" value="UniProtKB-UniRule"/>
</dbReference>
<dbReference type="FunFam" id="3.30.1440.10:FF:000001">
    <property type="entry name" value="50S ribosomal protein L5"/>
    <property type="match status" value="1"/>
</dbReference>
<dbReference type="Gene3D" id="3.30.1440.10">
    <property type="match status" value="1"/>
</dbReference>
<dbReference type="HAMAP" id="MF_01333_B">
    <property type="entry name" value="Ribosomal_uL5_B"/>
    <property type="match status" value="1"/>
</dbReference>
<dbReference type="InterPro" id="IPR002132">
    <property type="entry name" value="Ribosomal_uL5"/>
</dbReference>
<dbReference type="InterPro" id="IPR020930">
    <property type="entry name" value="Ribosomal_uL5_bac-type"/>
</dbReference>
<dbReference type="InterPro" id="IPR031309">
    <property type="entry name" value="Ribosomal_uL5_C"/>
</dbReference>
<dbReference type="InterPro" id="IPR020929">
    <property type="entry name" value="Ribosomal_uL5_CS"/>
</dbReference>
<dbReference type="InterPro" id="IPR022803">
    <property type="entry name" value="Ribosomal_uL5_dom_sf"/>
</dbReference>
<dbReference type="InterPro" id="IPR031310">
    <property type="entry name" value="Ribosomal_uL5_N"/>
</dbReference>
<dbReference type="NCBIfam" id="NF000585">
    <property type="entry name" value="PRK00010.1"/>
    <property type="match status" value="1"/>
</dbReference>
<dbReference type="PANTHER" id="PTHR11994">
    <property type="entry name" value="60S RIBOSOMAL PROTEIN L11-RELATED"/>
    <property type="match status" value="1"/>
</dbReference>
<dbReference type="Pfam" id="PF00281">
    <property type="entry name" value="Ribosomal_L5"/>
    <property type="match status" value="1"/>
</dbReference>
<dbReference type="Pfam" id="PF00673">
    <property type="entry name" value="Ribosomal_L5_C"/>
    <property type="match status" value="1"/>
</dbReference>
<dbReference type="PIRSF" id="PIRSF002161">
    <property type="entry name" value="Ribosomal_L5"/>
    <property type="match status" value="1"/>
</dbReference>
<dbReference type="SUPFAM" id="SSF55282">
    <property type="entry name" value="RL5-like"/>
    <property type="match status" value="1"/>
</dbReference>
<dbReference type="PROSITE" id="PS00358">
    <property type="entry name" value="RIBOSOMAL_L5"/>
    <property type="match status" value="1"/>
</dbReference>
<proteinExistence type="inferred from homology"/>
<accession>Q1WSA2</accession>
<name>RL5_LIGS1</name>
<reference key="1">
    <citation type="journal article" date="2006" name="Proc. Natl. Acad. Sci. U.S.A.">
        <title>Multireplicon genome architecture of Lactobacillus salivarius.</title>
        <authorList>
            <person name="Claesson M.J."/>
            <person name="Li Y."/>
            <person name="Leahy S."/>
            <person name="Canchaya C."/>
            <person name="van Pijkeren J.P."/>
            <person name="Cerdeno-Tarraga A.M."/>
            <person name="Parkhill J."/>
            <person name="Flynn S."/>
            <person name="O'Sullivan G.C."/>
            <person name="Collins J.K."/>
            <person name="Higgins D."/>
            <person name="Shanahan F."/>
            <person name="Fitzgerald G.F."/>
            <person name="van Sinderen D."/>
            <person name="O'Toole P.W."/>
        </authorList>
    </citation>
    <scope>NUCLEOTIDE SEQUENCE [LARGE SCALE GENOMIC DNA]</scope>
    <source>
        <strain>UCC118</strain>
    </source>
</reference>
<feature type="chain" id="PRO_1000052759" description="Large ribosomal subunit protein uL5">
    <location>
        <begin position="1"/>
        <end position="180"/>
    </location>
</feature>
<gene>
    <name evidence="1" type="primary">rplE</name>
    <name type="ordered locus">LSL_1423</name>
</gene>
<protein>
    <recommendedName>
        <fullName evidence="1">Large ribosomal subunit protein uL5</fullName>
    </recommendedName>
    <alternativeName>
        <fullName evidence="2">50S ribosomal protein L5</fullName>
    </alternativeName>
</protein>
<keyword id="KW-1185">Reference proteome</keyword>
<keyword id="KW-0687">Ribonucleoprotein</keyword>
<keyword id="KW-0689">Ribosomal protein</keyword>
<keyword id="KW-0694">RNA-binding</keyword>
<keyword id="KW-0699">rRNA-binding</keyword>
<keyword id="KW-0820">tRNA-binding</keyword>
<comment type="function">
    <text evidence="1">This is one of the proteins that bind and probably mediate the attachment of the 5S RNA into the large ribosomal subunit, where it forms part of the central protuberance. In the 70S ribosome it contacts protein S13 of the 30S subunit (bridge B1b), connecting the 2 subunits; this bridge is implicated in subunit movement. Contacts the P site tRNA; the 5S rRNA and some of its associated proteins might help stabilize positioning of ribosome-bound tRNAs.</text>
</comment>
<comment type="subunit">
    <text evidence="1">Part of the 50S ribosomal subunit; part of the 5S rRNA/L5/L18/L25 subcomplex. Contacts the 5S rRNA and the P site tRNA. Forms a bridge to the 30S subunit in the 70S ribosome.</text>
</comment>
<comment type="similarity">
    <text evidence="1">Belongs to the universal ribosomal protein uL5 family.</text>
</comment>